<proteinExistence type="inferred from homology"/>
<feature type="chain" id="PRO_0000365242" description="Probable DNA ligase">
    <location>
        <begin position="1"/>
        <end position="1017"/>
    </location>
</feature>
<feature type="region of interest" description="Unknown">
    <location>
        <begin position="1"/>
        <end position="363"/>
    </location>
</feature>
<feature type="region of interest" description="Disordered" evidence="3">
    <location>
        <begin position="326"/>
        <end position="352"/>
    </location>
</feature>
<feature type="region of interest" description="DNA ligase">
    <location>
        <begin position="364"/>
        <end position="1017"/>
    </location>
</feature>
<feature type="active site" description="N6-AMP-lysine intermediate" evidence="2">
    <location>
        <position position="669"/>
    </location>
</feature>
<feature type="binding site" evidence="1">
    <location>
        <position position="667"/>
    </location>
    <ligand>
        <name>ATP</name>
        <dbReference type="ChEBI" id="CHEBI:30616"/>
    </ligand>
</feature>
<feature type="binding site" evidence="1">
    <location>
        <position position="674"/>
    </location>
    <ligand>
        <name>ATP</name>
        <dbReference type="ChEBI" id="CHEBI:30616"/>
    </ligand>
</feature>
<feature type="binding site" evidence="1">
    <location>
        <position position="689"/>
    </location>
    <ligand>
        <name>ATP</name>
        <dbReference type="ChEBI" id="CHEBI:30616"/>
    </ligand>
</feature>
<feature type="binding site" evidence="1">
    <location>
        <position position="717"/>
    </location>
    <ligand>
        <name>ATP</name>
        <dbReference type="ChEBI" id="CHEBI:30616"/>
    </ligand>
</feature>
<feature type="binding site" evidence="1">
    <location>
        <position position="860"/>
    </location>
    <ligand>
        <name>ATP</name>
        <dbReference type="ChEBI" id="CHEBI:30616"/>
    </ligand>
</feature>
<feature type="binding site" evidence="1">
    <location>
        <position position="866"/>
    </location>
    <ligand>
        <name>ATP</name>
        <dbReference type="ChEBI" id="CHEBI:30616"/>
    </ligand>
</feature>
<reference key="1">
    <citation type="journal article" date="2011" name="J. Bacteriol.">
        <title>Genome sequence of the verrucomicrobium Opitutus terrae PB90-1, an abundant inhabitant of rice paddy soil ecosystems.</title>
        <authorList>
            <person name="van Passel M.W."/>
            <person name="Kant R."/>
            <person name="Palva A."/>
            <person name="Copeland A."/>
            <person name="Lucas S."/>
            <person name="Lapidus A."/>
            <person name="Glavina del Rio T."/>
            <person name="Pitluck S."/>
            <person name="Goltsman E."/>
            <person name="Clum A."/>
            <person name="Sun H."/>
            <person name="Schmutz J."/>
            <person name="Larimer F.W."/>
            <person name="Land M.L."/>
            <person name="Hauser L."/>
            <person name="Kyrpides N."/>
            <person name="Mikhailova N."/>
            <person name="Richardson P.P."/>
            <person name="Janssen P.H."/>
            <person name="de Vos W.M."/>
            <person name="Smidt H."/>
        </authorList>
    </citation>
    <scope>NUCLEOTIDE SEQUENCE [LARGE SCALE GENOMIC DNA]</scope>
    <source>
        <strain>DSM 11246 / JCM 15787 / PB90-1</strain>
    </source>
</reference>
<protein>
    <recommendedName>
        <fullName>Probable DNA ligase</fullName>
        <ecNumber evidence="2">6.5.1.1</ecNumber>
    </recommendedName>
    <alternativeName>
        <fullName>Polydeoxyribonucleotide synthase [ATP]</fullName>
    </alternativeName>
</protein>
<gene>
    <name type="primary">lig</name>
    <name type="ordered locus">Oter_3148</name>
</gene>
<comment type="function">
    <text evidence="1">DNA ligase that seals nicks in double-stranded DNA during DNA replication, DNA recombination and DNA repair.</text>
</comment>
<comment type="catalytic activity">
    <reaction evidence="2">
        <text>ATP + (deoxyribonucleotide)n-3'-hydroxyl + 5'-phospho-(deoxyribonucleotide)m = (deoxyribonucleotide)n+m + AMP + diphosphate.</text>
        <dbReference type="EC" id="6.5.1.1"/>
    </reaction>
</comment>
<comment type="cofactor">
    <cofactor evidence="1">
        <name>Mg(2+)</name>
        <dbReference type="ChEBI" id="CHEBI:18420"/>
    </cofactor>
</comment>
<comment type="similarity">
    <text evidence="4">In the C-terminal section; belongs to the ATP-dependent DNA ligase family.</text>
</comment>
<accession>B1ZZL9</accession>
<dbReference type="EC" id="6.5.1.1" evidence="2"/>
<dbReference type="EMBL" id="CP001032">
    <property type="protein sequence ID" value="ACB76428.1"/>
    <property type="molecule type" value="Genomic_DNA"/>
</dbReference>
<dbReference type="RefSeq" id="WP_012375957.1">
    <property type="nucleotide sequence ID" value="NC_010571.1"/>
</dbReference>
<dbReference type="SMR" id="B1ZZL9"/>
<dbReference type="STRING" id="452637.Oter_3148"/>
<dbReference type="KEGG" id="ote:Oter_3148"/>
<dbReference type="eggNOG" id="COG1236">
    <property type="taxonomic scope" value="Bacteria"/>
</dbReference>
<dbReference type="eggNOG" id="COG1793">
    <property type="taxonomic scope" value="Bacteria"/>
</dbReference>
<dbReference type="HOGENOM" id="CLU_296629_0_0_0"/>
<dbReference type="OrthoDB" id="9802472at2"/>
<dbReference type="Proteomes" id="UP000007013">
    <property type="component" value="Chromosome"/>
</dbReference>
<dbReference type="GO" id="GO:0005524">
    <property type="term" value="F:ATP binding"/>
    <property type="evidence" value="ECO:0007669"/>
    <property type="project" value="UniProtKB-KW"/>
</dbReference>
<dbReference type="GO" id="GO:0003677">
    <property type="term" value="F:DNA binding"/>
    <property type="evidence" value="ECO:0007669"/>
    <property type="project" value="InterPro"/>
</dbReference>
<dbReference type="GO" id="GO:0003910">
    <property type="term" value="F:DNA ligase (ATP) activity"/>
    <property type="evidence" value="ECO:0007669"/>
    <property type="project" value="UniProtKB-EC"/>
</dbReference>
<dbReference type="GO" id="GO:0046872">
    <property type="term" value="F:metal ion binding"/>
    <property type="evidence" value="ECO:0007669"/>
    <property type="project" value="UniProtKB-KW"/>
</dbReference>
<dbReference type="GO" id="GO:0051301">
    <property type="term" value="P:cell division"/>
    <property type="evidence" value="ECO:0007669"/>
    <property type="project" value="UniProtKB-KW"/>
</dbReference>
<dbReference type="GO" id="GO:0071897">
    <property type="term" value="P:DNA biosynthetic process"/>
    <property type="evidence" value="ECO:0007669"/>
    <property type="project" value="InterPro"/>
</dbReference>
<dbReference type="GO" id="GO:0006310">
    <property type="term" value="P:DNA recombination"/>
    <property type="evidence" value="ECO:0007669"/>
    <property type="project" value="UniProtKB-KW"/>
</dbReference>
<dbReference type="GO" id="GO:0006281">
    <property type="term" value="P:DNA repair"/>
    <property type="evidence" value="ECO:0007669"/>
    <property type="project" value="UniProtKB-KW"/>
</dbReference>
<dbReference type="GO" id="GO:0006260">
    <property type="term" value="P:DNA replication"/>
    <property type="evidence" value="ECO:0007669"/>
    <property type="project" value="UniProtKB-KW"/>
</dbReference>
<dbReference type="CDD" id="cd07898">
    <property type="entry name" value="Adenylation_DNA_ligase"/>
    <property type="match status" value="1"/>
</dbReference>
<dbReference type="CDD" id="cd07972">
    <property type="entry name" value="OBF_DNA_ligase_Arch_LigB"/>
    <property type="match status" value="1"/>
</dbReference>
<dbReference type="Gene3D" id="3.40.50.12650">
    <property type="match status" value="1"/>
</dbReference>
<dbReference type="Gene3D" id="1.10.3260.10">
    <property type="entry name" value="DNA ligase, ATP-dependent, N-terminal domain"/>
    <property type="match status" value="1"/>
</dbReference>
<dbReference type="Gene3D" id="3.30.470.30">
    <property type="entry name" value="DNA ligase/mRNA capping enzyme"/>
    <property type="match status" value="1"/>
</dbReference>
<dbReference type="Gene3D" id="2.40.50.140">
    <property type="entry name" value="Nucleic acid-binding proteins"/>
    <property type="match status" value="1"/>
</dbReference>
<dbReference type="Gene3D" id="3.60.15.10">
    <property type="entry name" value="Ribonuclease Z/Hydroxyacylglutathione hydrolase-like"/>
    <property type="match status" value="1"/>
</dbReference>
<dbReference type="InterPro" id="IPR050191">
    <property type="entry name" value="ATP-dep_DNA_ligase"/>
</dbReference>
<dbReference type="InterPro" id="IPR000977">
    <property type="entry name" value="DNA_ligase_ATP-dep"/>
</dbReference>
<dbReference type="InterPro" id="IPR012309">
    <property type="entry name" value="DNA_ligase_ATP-dep_C"/>
</dbReference>
<dbReference type="InterPro" id="IPR012310">
    <property type="entry name" value="DNA_ligase_ATP-dep_cent"/>
</dbReference>
<dbReference type="InterPro" id="IPR016059">
    <property type="entry name" value="DNA_ligase_ATP-dep_CS"/>
</dbReference>
<dbReference type="InterPro" id="IPR012308">
    <property type="entry name" value="DNA_ligase_ATP-dep_N"/>
</dbReference>
<dbReference type="InterPro" id="IPR036599">
    <property type="entry name" value="DNA_ligase_N_sf"/>
</dbReference>
<dbReference type="InterPro" id="IPR012340">
    <property type="entry name" value="NA-bd_OB-fold"/>
</dbReference>
<dbReference type="InterPro" id="IPR036866">
    <property type="entry name" value="RibonucZ/Hydroxyglut_hydro"/>
</dbReference>
<dbReference type="InterPro" id="IPR011108">
    <property type="entry name" value="RMMBL"/>
</dbReference>
<dbReference type="NCBIfam" id="TIGR00574">
    <property type="entry name" value="dnl1"/>
    <property type="match status" value="1"/>
</dbReference>
<dbReference type="PANTHER" id="PTHR45674">
    <property type="entry name" value="DNA LIGASE 1/3 FAMILY MEMBER"/>
    <property type="match status" value="1"/>
</dbReference>
<dbReference type="PANTHER" id="PTHR45674:SF13">
    <property type="entry name" value="DNA LIGASE-RELATED"/>
    <property type="match status" value="1"/>
</dbReference>
<dbReference type="Pfam" id="PF04679">
    <property type="entry name" value="DNA_ligase_A_C"/>
    <property type="match status" value="1"/>
</dbReference>
<dbReference type="Pfam" id="PF01068">
    <property type="entry name" value="DNA_ligase_A_M"/>
    <property type="match status" value="1"/>
</dbReference>
<dbReference type="Pfam" id="PF04675">
    <property type="entry name" value="DNA_ligase_A_N"/>
    <property type="match status" value="1"/>
</dbReference>
<dbReference type="Pfam" id="PF07521">
    <property type="entry name" value="RMMBL"/>
    <property type="match status" value="1"/>
</dbReference>
<dbReference type="SUPFAM" id="SSF117018">
    <property type="entry name" value="ATP-dependent DNA ligase DNA-binding domain"/>
    <property type="match status" value="1"/>
</dbReference>
<dbReference type="SUPFAM" id="SSF56091">
    <property type="entry name" value="DNA ligase/mRNA capping enzyme, catalytic domain"/>
    <property type="match status" value="1"/>
</dbReference>
<dbReference type="SUPFAM" id="SSF56281">
    <property type="entry name" value="Metallo-hydrolase/oxidoreductase"/>
    <property type="match status" value="1"/>
</dbReference>
<dbReference type="SUPFAM" id="SSF50249">
    <property type="entry name" value="Nucleic acid-binding proteins"/>
    <property type="match status" value="1"/>
</dbReference>
<dbReference type="PROSITE" id="PS00697">
    <property type="entry name" value="DNA_LIGASE_A1"/>
    <property type="match status" value="1"/>
</dbReference>
<dbReference type="PROSITE" id="PS00333">
    <property type="entry name" value="DNA_LIGASE_A2"/>
    <property type="match status" value="1"/>
</dbReference>
<dbReference type="PROSITE" id="PS50160">
    <property type="entry name" value="DNA_LIGASE_A3"/>
    <property type="match status" value="1"/>
</dbReference>
<keyword id="KW-0067">ATP-binding</keyword>
<keyword id="KW-0131">Cell cycle</keyword>
<keyword id="KW-0132">Cell division</keyword>
<keyword id="KW-0227">DNA damage</keyword>
<keyword id="KW-0233">DNA recombination</keyword>
<keyword id="KW-0234">DNA repair</keyword>
<keyword id="KW-0235">DNA replication</keyword>
<keyword id="KW-0436">Ligase</keyword>
<keyword id="KW-0460">Magnesium</keyword>
<keyword id="KW-0479">Metal-binding</keyword>
<keyword id="KW-0547">Nucleotide-binding</keyword>
<keyword id="KW-1185">Reference proteome</keyword>
<organism>
    <name type="scientific">Opitutus terrae (strain DSM 11246 / JCM 15787 / PB90-1)</name>
    <dbReference type="NCBI Taxonomy" id="452637"/>
    <lineage>
        <taxon>Bacteria</taxon>
        <taxon>Pseudomonadati</taxon>
        <taxon>Verrucomicrobiota</taxon>
        <taxon>Opitutia</taxon>
        <taxon>Opitutales</taxon>
        <taxon>Opitutaceae</taxon>
        <taxon>Opitutus</taxon>
    </lineage>
</organism>
<name>DNLI_OPITP</name>
<evidence type="ECO:0000250" key="1"/>
<evidence type="ECO:0000255" key="2">
    <source>
        <dbReference type="PROSITE-ProRule" id="PRU10135"/>
    </source>
</evidence>
<evidence type="ECO:0000256" key="3">
    <source>
        <dbReference type="SAM" id="MobiDB-lite"/>
    </source>
</evidence>
<evidence type="ECO:0000305" key="4"/>
<sequence>MPWDVKFSHGLYLPQLGWWLDAHFPQKRSFVSHAHSDHTATHDEILCSAGTAALMRARLDAKRIEHVLPFGQTEQLTADCGVTLHPAGHIFGSAQCLLEHGEHGSLLYTGDFKLRRGRSAEPCATPHAELVIMETTFGRPHYVFPPTAQVLNDIATFCHETIADDGVPVLFGYSLGKSQELLCSLEESQLPVMLHPQTHKLTRVYEQFGIAFPPYREFDLATVRGHVVICPPQSRESAFVRRIPGHRTAMITGWAMDPGAIYRYQCDAAFPLSDHADYQDLLRFVEAVNPQRVLTLHGFATEFAQTLRERGLEAWAIGEDNQLELGIRSSPPQVRAGDATPSSRSSGDAGVAAPACATPLHAPDSFARFVAAADAVKATPKKLEKIAVLRDYLAALTPPDMGTAATFLTGRAFPQRDPRNLTLGWSVIKRAVLEVAGVTEADYRDAYHRFADTGDAAGAVLAQRSLRPGDATPSSRPEILGVAGVADPGPAASRPAATSAPTTCSLADMALFFERAAAARGPAAKLDLLRERLALITPDEARYLIKIITGDLRIGLKEGLVEEALAAAAGQPLEAVREAAMLCGDIAAVARAARTDTLAEIQLTVFNPLQFMLASPEPTAEAIVDRFAAQRTAEAAAIVAGVGDPGPGSSSPATADAAPALARIWLEEKYDGIRCQLHKSGGRVELYSRDLNVITEQFPDLARAALALPHDFIGDGELLAWRDGRALPFAELQKRLGRKGGDDFFLGAEIPVSISFYDLLWLDGRSLLKEPLRERRALLERLLHGDATPSSRPDGDEGVAAPALQPATLNPQLSTKFSLAPVTFAHTASDIEAAFLAARQRGNEGLMAKDPASGYTPGRRGLAWLKLKKAYATLDVVVVGVEYGHGKRRDVLSDYTFAIRDEEHDNQLLTVGKAYSGLTDVEIAQLTQHFLEHTLEVHGRYRVVVPDTVIEVAFDTIQPSSRHQSGFALRFPRIARIRTDKTPAEIDTLATCRKLAAAAGSGGIAAVGARPPPAASD</sequence>